<keyword id="KW-0275">Fatty acid biosynthesis</keyword>
<keyword id="KW-0276">Fatty acid metabolism</keyword>
<keyword id="KW-0408">Iron</keyword>
<keyword id="KW-0444">Lipid biosynthesis</keyword>
<keyword id="KW-0443">Lipid metabolism</keyword>
<keyword id="KW-0456">Lyase</keyword>
<keyword id="KW-0479">Metal-binding</keyword>
<keyword id="KW-0496">Mitochondrion</keyword>
<keyword id="KW-0925">Oxylipin biosynthesis</keyword>
<keyword id="KW-1185">Reference proteome</keyword>
<protein>
    <recommendedName>
        <fullName evidence="4">Mitochondrial hydroperoxide bicyclase CYP50918A1</fullName>
        <ecNumber evidence="3">4.2.1.-</ecNumber>
    </recommendedName>
    <alternativeName>
        <fullName evidence="5">Cytochrome P450 50918A1</fullName>
    </alternativeName>
</protein>
<reference key="1">
    <citation type="journal article" date="2015" name="Sci. Rep.">
        <title>The Plasmodiophora brassicae genome reveals insights in its life cycle and ancestry of chitin synthases.</title>
        <authorList>
            <person name="Schwelm A."/>
            <person name="Fogelqvist J."/>
            <person name="Knaust A."/>
            <person name="Juelke S."/>
            <person name="Lilja T."/>
            <person name="Bonilla-Rosso G."/>
            <person name="Karlsson M."/>
            <person name="Shevchenko A."/>
            <person name="Dhandapani V."/>
            <person name="Choi S.R."/>
            <person name="Kim H.G."/>
            <person name="Park J.Y."/>
            <person name="Lim Y.P."/>
            <person name="Ludwig-Mueller J."/>
            <person name="Dixelius C."/>
        </authorList>
    </citation>
    <scope>NUCLEOTIDE SEQUENCE [LARGE SCALE GENOMIC DNA]</scope>
    <source>
        <strain>E3</strain>
        <tissue>Spore</tissue>
    </source>
</reference>
<reference key="2">
    <citation type="journal article" date="2019" name="Sci. Rep.">
        <title>The architecture of the Plasmodiophora brassicae nuclear and mitochondrial genomes.</title>
        <authorList>
            <person name="Stjelja S."/>
            <person name="Fogelqvist J."/>
            <person name="Tellgren-Roth C."/>
            <person name="Dixelius C."/>
        </authorList>
    </citation>
    <scope>NUCLEOTIDE SEQUENCE [LARGE SCALE GENOMIC DNA]</scope>
    <source>
        <strain>E3</strain>
        <tissue>Spore</tissue>
    </source>
</reference>
<reference key="3">
    <citation type="journal article" date="2022" name="Sci. Rep.">
        <title>Author Correction: The architecture of the Plasmodiophora brassicae nuclear and mitochondrial genomes.</title>
        <authorList>
            <person name="Stjelja S."/>
            <person name="Fogelqvist J."/>
            <person name="Tellgren-Roth C."/>
            <person name="Dixelius C."/>
        </authorList>
    </citation>
    <scope>ERRATUM OF PUBMED:31673019</scope>
</reference>
<reference key="4">
    <citation type="journal article" date="2021" name="Biochim. Biophys. Acta">
        <title>Hydroperoxide bicyclase CYP50918A1 of Plasmodiophora brassicae (Rhizaria, SAR): Detection of novel enzyme of oxylipin biosynthesis.</title>
        <authorList>
            <person name="Grechkin A.N."/>
            <person name="Lantsova N.V."/>
            <person name="Khairutdinov B.I."/>
            <person name="Toporkova Y.Y."/>
        </authorList>
    </citation>
    <scope>FUNCTION</scope>
    <scope>CATALYTIC ACTIVITY</scope>
    <scope>PATHWAY</scope>
    <scope>BIOPHYSICOCHEMICAL PROPERTIES</scope>
    <source>
        <strain>Woronin 1877</strain>
    </source>
</reference>
<name>CP8A1_PLABS</name>
<geneLocation type="mitochondrion"/>
<evidence type="ECO:0000250" key="1">
    <source>
        <dbReference type="UniProtKB" id="Q96242"/>
    </source>
</evidence>
<evidence type="ECO:0000256" key="2">
    <source>
        <dbReference type="SAM" id="MobiDB-lite"/>
    </source>
</evidence>
<evidence type="ECO:0000269" key="3">
    <source>
    </source>
</evidence>
<evidence type="ECO:0000303" key="4">
    <source>
    </source>
</evidence>
<evidence type="ECO:0000305" key="5"/>
<evidence type="ECO:0000312" key="6">
    <source>
        <dbReference type="EMBL" id="CEO97746.1"/>
    </source>
</evidence>
<evidence type="ECO:0000312" key="7">
    <source>
        <dbReference type="EMBL" id="SPQ98293.1"/>
    </source>
</evidence>
<accession>A0A0G4IRM5</accession>
<sequence>MPDAFDVSDDKQLVDQQLTRDSDSKPAAKPASKQKPPSKVPGVLAADPVPEPGAAPVQAREQGHAPQGNRKPAVLEPAYHESRVVRLARYVASWTGPVNPLPAIDVLRWATNLMQSFIDARAAAGGVPVFRMHIGLPVVVITDHASAKFFLGSPSSDLDREDFKRFGPLGVAPSLLKNAMPSLVASDATGHKVDRALTVAVMHSRFKHVDEALRQSQQIVYDDFMPGVFRHPDQYTIRDVAYKFVGQFMFKWLLNTTPPSLKALRGYPVDCIIDLQTSNWLGTLVGSALCKLKMAATHSSTLNAEGLDIVRHSRLYETYRKMAETMGYTTADLDLWLQFLVQFNGVAGIGLTLASAIAVLSEQLSTLDELRREVGDEPLRFDTVDGKFPLLDSFAYEWMRFFMGPRVIFKKAMKDLQVPTSDGNLYKVRKDELICAALPLCQRDGTVYDAPNRFNARRFLDNPSLKWQVFNFGFVEAEHNPKPVQTARFGCALYSAGVGLALFKVLIGTWIQRIDWECDQEFTFVGNDTGDHGPPNGKFSVIKPRQPKH</sequence>
<gene>
    <name evidence="4" type="primary">CYP50918A1</name>
    <name evidence="6" type="ORF">PBRA_005860</name>
    <name evidence="7" type="ORF">PLBR_LOCUS5508</name>
</gene>
<feature type="chain" id="PRO_0000458102" description="Mitochondrial hydroperoxide bicyclase CYP50918A1">
    <location>
        <begin position="1"/>
        <end position="549"/>
    </location>
</feature>
<feature type="region of interest" description="Disordered" evidence="2">
    <location>
        <begin position="1"/>
        <end position="75"/>
    </location>
</feature>
<feature type="region of interest" description="Disordered" evidence="2">
    <location>
        <begin position="528"/>
        <end position="549"/>
    </location>
</feature>
<feature type="compositionally biased region" description="Basic and acidic residues" evidence="2">
    <location>
        <begin position="8"/>
        <end position="26"/>
    </location>
</feature>
<feature type="compositionally biased region" description="Low complexity" evidence="2">
    <location>
        <begin position="27"/>
        <end position="41"/>
    </location>
</feature>
<feature type="binding site" description="axial binding residue" evidence="1">
    <location>
        <position position="491"/>
    </location>
    <ligand>
        <name>heme</name>
        <dbReference type="ChEBI" id="CHEBI:30413"/>
    </ligand>
    <ligandPart>
        <name>Fe</name>
        <dbReference type="ChEBI" id="CHEBI:18248"/>
    </ligandPart>
</feature>
<comment type="function">
    <text evidence="3">Cytochrome P450 hydroperoxide bicyclase involved in the metabolism of oxylipins natural products such as egregiachlorides, hybridalactone, ecklonialactones and related bicyclic oxylipins (PubMed:34450267). Isomerizes the hydroperoxides into epoxyalcohols via epoxyallylic radical (PubMed:34450267). Can use alpha-linolenic 13-hydroperoxide ((9Z,11E,13S,15Z)-13-hydroperoxy-9,11,15-octadecatrienoic, 13-HPOT) as preferred substrate to produce the heterobicyclic oxylipins plasmodiophorol A (6-oxabicyclo[3.1.0]hexane) and plasmodiophorol B (2-oxabicyclo[2.2.1]heptane) at the ratio 12:1 and a minor product plasmodiophorol C (cyclopentanediol) formed through the hydrolysis of plasmodiophorols A and B and, to a lower extent, active with linoleic acid 13-hydroperoxide ((9Z,11E,13S)-13-hydroperoxy-9,11-octadecadienoic, 13-HPOD), linoleic acid 9-hydroperoxide ((9S,10E,12Z)-9-hydroperoxy-10,12-octadecadienoic, 9-HPOD) and alpha-linolenic 9-hydroperoxide ((9S,10E,12Z,15Z)-9-hydroperoxy-10,12,15-octadecatrienoic, 9-HPOT) (PubMed:34450267).</text>
</comment>
<comment type="catalytic activity">
    <reaction evidence="3">
        <text>(13S)-hydroperoxy-(9Z,11E,15Z)-octadecatrienoate = plasmodiophorol A</text>
        <dbReference type="Rhea" id="RHEA:75603"/>
        <dbReference type="ChEBI" id="CHEBI:58757"/>
        <dbReference type="ChEBI" id="CHEBI:194366"/>
    </reaction>
    <physiologicalReaction direction="left-to-right" evidence="3">
        <dbReference type="Rhea" id="RHEA:75604"/>
    </physiologicalReaction>
</comment>
<comment type="catalytic activity">
    <reaction evidence="3">
        <text>(13S)-hydroperoxy-(9Z,11E,15Z)-octadecatrienoate = plasmodiophorol B</text>
        <dbReference type="Rhea" id="RHEA:75607"/>
        <dbReference type="ChEBI" id="CHEBI:58757"/>
        <dbReference type="ChEBI" id="CHEBI:194367"/>
    </reaction>
    <physiologicalReaction direction="left-to-right" evidence="3">
        <dbReference type="Rhea" id="RHEA:75608"/>
    </physiologicalReaction>
</comment>
<comment type="cofactor">
    <cofactor evidence="1">
        <name>heme</name>
        <dbReference type="ChEBI" id="CHEBI:30413"/>
    </cofactor>
</comment>
<comment type="biophysicochemical properties">
    <kinetics>
        <KM evidence="3">63.3 uM for 13(S)-HPOT</KM>
        <KM evidence="3">173 uM for 13(S)-HPOD</KM>
        <KM evidence="3">293.1 uM for 9(S)-HPOT</KM>
        <KM evidence="3">88.5 uM for 9(S)-HPOD</KM>
        <text evidence="3">kcat is 638.2 sec(-1) with 13(S)-HPOT as substrate (PubMed:34450267). kcat is 451.1 sec(-1) with 13(S)-HPOD as substrate (PubMed:34450267). kcat is 105.5 sec(-1) with 9(S)-HPOT as substrate (PubMed:34450267). kcat is 154.7 sec(-1) with 9(S)-HPOD as substrate (PubMed:34450267).</text>
    </kinetics>
</comment>
<comment type="pathway">
    <text evidence="3">Lipid metabolism; oxylipin biosynthesis.</text>
</comment>
<comment type="subcellular location">
    <subcellularLocation>
        <location evidence="5">Mitochondrion</location>
    </subcellularLocation>
</comment>
<comment type="similarity">
    <text evidence="5">Belongs to the cytochrome P450 family.</text>
</comment>
<organism>
    <name type="scientific">Plasmodiophora brassicae</name>
    <name type="common">Clubroot disease agent</name>
    <dbReference type="NCBI Taxonomy" id="37360"/>
    <lineage>
        <taxon>Eukaryota</taxon>
        <taxon>Sar</taxon>
        <taxon>Rhizaria</taxon>
        <taxon>Endomyxa</taxon>
        <taxon>Phytomyxea</taxon>
        <taxon>Plasmodiophorida</taxon>
        <taxon>Plasmodiophoridae</taxon>
        <taxon>Plasmodiophora</taxon>
    </lineage>
</organism>
<dbReference type="EC" id="4.2.1.-" evidence="3"/>
<dbReference type="EMBL" id="CDSF01000080">
    <property type="protein sequence ID" value="CEO97746.1"/>
    <property type="molecule type" value="Genomic_DNA"/>
</dbReference>
<dbReference type="EMBL" id="OVEO01000009">
    <property type="protein sequence ID" value="SPQ98293.1"/>
    <property type="molecule type" value="Genomic_DNA"/>
</dbReference>
<dbReference type="EnsemblProtists" id="CEO97746">
    <property type="protein sequence ID" value="CEO97746"/>
    <property type="gene ID" value="PBRA_005860"/>
</dbReference>
<dbReference type="OrthoDB" id="3945418at2759"/>
<dbReference type="UniPathway" id="UPA00382"/>
<dbReference type="Proteomes" id="UP000039324">
    <property type="component" value="Unassembled WGS sequence"/>
</dbReference>
<dbReference type="Proteomes" id="UP000290189">
    <property type="component" value="Unassembled WGS sequence"/>
</dbReference>
<dbReference type="GO" id="GO:0005739">
    <property type="term" value="C:mitochondrion"/>
    <property type="evidence" value="ECO:0007669"/>
    <property type="project" value="UniProtKB-SubCell"/>
</dbReference>
<dbReference type="GO" id="GO:0020037">
    <property type="term" value="F:heme binding"/>
    <property type="evidence" value="ECO:0007669"/>
    <property type="project" value="InterPro"/>
</dbReference>
<dbReference type="GO" id="GO:0005506">
    <property type="term" value="F:iron ion binding"/>
    <property type="evidence" value="ECO:0007669"/>
    <property type="project" value="InterPro"/>
</dbReference>
<dbReference type="GO" id="GO:0016829">
    <property type="term" value="F:lyase activity"/>
    <property type="evidence" value="ECO:0007669"/>
    <property type="project" value="UniProtKB-KW"/>
</dbReference>
<dbReference type="GO" id="GO:0004497">
    <property type="term" value="F:monooxygenase activity"/>
    <property type="evidence" value="ECO:0007669"/>
    <property type="project" value="InterPro"/>
</dbReference>
<dbReference type="GO" id="GO:0016705">
    <property type="term" value="F:oxidoreductase activity, acting on paired donors, with incorporation or reduction of molecular oxygen"/>
    <property type="evidence" value="ECO:0007669"/>
    <property type="project" value="InterPro"/>
</dbReference>
<dbReference type="GO" id="GO:0006633">
    <property type="term" value="P:fatty acid biosynthetic process"/>
    <property type="evidence" value="ECO:0007669"/>
    <property type="project" value="UniProtKB-KW"/>
</dbReference>
<dbReference type="GO" id="GO:0031408">
    <property type="term" value="P:oxylipin biosynthetic process"/>
    <property type="evidence" value="ECO:0007669"/>
    <property type="project" value="UniProtKB-UniPathway"/>
</dbReference>
<dbReference type="GO" id="GO:0016125">
    <property type="term" value="P:sterol metabolic process"/>
    <property type="evidence" value="ECO:0007669"/>
    <property type="project" value="TreeGrafter"/>
</dbReference>
<dbReference type="Gene3D" id="1.10.630.10">
    <property type="entry name" value="Cytochrome P450"/>
    <property type="match status" value="1"/>
</dbReference>
<dbReference type="InterPro" id="IPR001128">
    <property type="entry name" value="Cyt_P450"/>
</dbReference>
<dbReference type="InterPro" id="IPR036396">
    <property type="entry name" value="Cyt_P450_sf"/>
</dbReference>
<dbReference type="PANTHER" id="PTHR24286:SF255">
    <property type="entry name" value="ALLENE OXIDE SYNTHASE, CHLOROPLASTIC"/>
    <property type="match status" value="1"/>
</dbReference>
<dbReference type="PANTHER" id="PTHR24286">
    <property type="entry name" value="CYTOCHROME P450 26"/>
    <property type="match status" value="1"/>
</dbReference>
<dbReference type="Pfam" id="PF00067">
    <property type="entry name" value="p450"/>
    <property type="match status" value="1"/>
</dbReference>
<dbReference type="SUPFAM" id="SSF48264">
    <property type="entry name" value="Cytochrome P450"/>
    <property type="match status" value="1"/>
</dbReference>
<proteinExistence type="evidence at protein level"/>